<feature type="chain" id="PRO_0000048366" description="Tubulin beta-4 chain">
    <location>
        <begin position="1"/>
        <end position="447"/>
    </location>
</feature>
<feature type="region of interest" description="Disordered" evidence="3">
    <location>
        <begin position="423"/>
        <end position="447"/>
    </location>
</feature>
<feature type="compositionally biased region" description="Acidic residues" evidence="3">
    <location>
        <begin position="429"/>
        <end position="447"/>
    </location>
</feature>
<feature type="binding site" evidence="2">
    <location>
        <position position="11"/>
    </location>
    <ligand>
        <name>GTP</name>
        <dbReference type="ChEBI" id="CHEBI:37565"/>
    </ligand>
</feature>
<feature type="binding site" evidence="1">
    <location>
        <position position="69"/>
    </location>
    <ligand>
        <name>GTP</name>
        <dbReference type="ChEBI" id="CHEBI:37565"/>
    </ligand>
</feature>
<feature type="binding site" evidence="1">
    <location>
        <position position="69"/>
    </location>
    <ligand>
        <name>Mg(2+)</name>
        <dbReference type="ChEBI" id="CHEBI:18420"/>
    </ligand>
</feature>
<feature type="binding site" evidence="2">
    <location>
        <position position="138"/>
    </location>
    <ligand>
        <name>GTP</name>
        <dbReference type="ChEBI" id="CHEBI:37565"/>
    </ligand>
</feature>
<feature type="binding site" evidence="2">
    <location>
        <position position="142"/>
    </location>
    <ligand>
        <name>GTP</name>
        <dbReference type="ChEBI" id="CHEBI:37565"/>
    </ligand>
</feature>
<feature type="binding site" evidence="2">
    <location>
        <position position="143"/>
    </location>
    <ligand>
        <name>GTP</name>
        <dbReference type="ChEBI" id="CHEBI:37565"/>
    </ligand>
</feature>
<feature type="binding site" evidence="2">
    <location>
        <position position="144"/>
    </location>
    <ligand>
        <name>GTP</name>
        <dbReference type="ChEBI" id="CHEBI:37565"/>
    </ligand>
</feature>
<feature type="binding site" evidence="2">
    <location>
        <position position="204"/>
    </location>
    <ligand>
        <name>GTP</name>
        <dbReference type="ChEBI" id="CHEBI:37565"/>
    </ligand>
</feature>
<feature type="binding site" evidence="2">
    <location>
        <position position="226"/>
    </location>
    <ligand>
        <name>GTP</name>
        <dbReference type="ChEBI" id="CHEBI:37565"/>
    </ligand>
</feature>
<feature type="sequence conflict" description="In Ref. 3; CAA55022." evidence="7" ref="3">
    <original>V</original>
    <variation>L</variation>
    <location>
        <position position="201"/>
    </location>
</feature>
<feature type="sequence conflict" description="In Ref. 2; AAA66495." evidence="7" ref="2">
    <original>L</original>
    <variation>R</variation>
    <location>
        <position position="202"/>
    </location>
</feature>
<reference key="1">
    <citation type="journal article" date="1995" name="DNA Res.">
        <title>cDNA sequences of three kinds of beta-tubulins from rice.</title>
        <authorList>
            <person name="Koga-Ban Y."/>
            <person name="Niki T."/>
            <person name="Nagamura Y."/>
            <person name="Sasaki T."/>
            <person name="Minobe Y."/>
        </authorList>
    </citation>
    <scope>NUCLEOTIDE SEQUENCE [MRNA]</scope>
    <scope>INDUCTION</scope>
    <source>
        <strain>cv. Nipponbare</strain>
        <tissue>Root</tissue>
    </source>
</reference>
<reference key="2">
    <citation type="journal article" date="1994" name="Plant Mol. Biol.">
        <title>Isolation and characterization of two beta-tubulin cDNA clones from rice.</title>
        <authorList>
            <person name="Kang M.S."/>
            <person name="Choi Y.J."/>
            <person name="Kim M.C."/>
            <person name="Lim C.O."/>
            <person name="Hwang I."/>
            <person name="Cho M.J."/>
        </authorList>
    </citation>
    <scope>NUCLEOTIDE SEQUENCE [MRNA]</scope>
    <scope>DEVELOPMENTAL STAGE</scope>
    <source>
        <tissue>Leaf</tissue>
    </source>
</reference>
<reference key="3">
    <citation type="journal article" date="1995" name="Plant Physiol.">
        <title>Three rice cDNA clones encoding different beta-tubulin isotypes.</title>
        <authorList>
            <person name="Breviario D."/>
            <person name="Giani S."/>
            <person name="Meoni C."/>
        </authorList>
    </citation>
    <scope>NUCLEOTIDE SEQUENCE [MRNA]</scope>
    <source>
        <strain>cv. Arborio</strain>
        <tissue>Coleoptile</tissue>
    </source>
</reference>
<reference key="4">
    <citation type="journal article" date="2002" name="Nature">
        <title>The genome sequence and structure of rice chromosome 1.</title>
        <authorList>
            <person name="Sasaki T."/>
            <person name="Matsumoto T."/>
            <person name="Yamamoto K."/>
            <person name="Sakata K."/>
            <person name="Baba T."/>
            <person name="Katayose Y."/>
            <person name="Wu J."/>
            <person name="Niimura Y."/>
            <person name="Cheng Z."/>
            <person name="Nagamura Y."/>
            <person name="Antonio B.A."/>
            <person name="Kanamori H."/>
            <person name="Hosokawa S."/>
            <person name="Masukawa M."/>
            <person name="Arikawa K."/>
            <person name="Chiden Y."/>
            <person name="Hayashi M."/>
            <person name="Okamoto M."/>
            <person name="Ando T."/>
            <person name="Aoki H."/>
            <person name="Arita K."/>
            <person name="Hamada M."/>
            <person name="Harada C."/>
            <person name="Hijishita S."/>
            <person name="Honda M."/>
            <person name="Ichikawa Y."/>
            <person name="Idonuma A."/>
            <person name="Iijima M."/>
            <person name="Ikeda M."/>
            <person name="Ikeno M."/>
            <person name="Ito S."/>
            <person name="Ito T."/>
            <person name="Ito Y."/>
            <person name="Ito Y."/>
            <person name="Iwabuchi A."/>
            <person name="Kamiya K."/>
            <person name="Karasawa W."/>
            <person name="Katagiri S."/>
            <person name="Kikuta A."/>
            <person name="Kobayashi N."/>
            <person name="Kono I."/>
            <person name="Machita K."/>
            <person name="Maehara T."/>
            <person name="Mizuno H."/>
            <person name="Mizubayashi T."/>
            <person name="Mukai Y."/>
            <person name="Nagasaki H."/>
            <person name="Nakashima M."/>
            <person name="Nakama Y."/>
            <person name="Nakamichi Y."/>
            <person name="Nakamura M."/>
            <person name="Namiki N."/>
            <person name="Negishi M."/>
            <person name="Ohta I."/>
            <person name="Ono N."/>
            <person name="Saji S."/>
            <person name="Sakai K."/>
            <person name="Shibata M."/>
            <person name="Shimokawa T."/>
            <person name="Shomura A."/>
            <person name="Song J."/>
            <person name="Takazaki Y."/>
            <person name="Terasawa K."/>
            <person name="Tsuji K."/>
            <person name="Waki K."/>
            <person name="Yamagata H."/>
            <person name="Yamane H."/>
            <person name="Yoshiki S."/>
            <person name="Yoshihara R."/>
            <person name="Yukawa K."/>
            <person name="Zhong H."/>
            <person name="Iwama H."/>
            <person name="Endo T."/>
            <person name="Ito H."/>
            <person name="Hahn J.H."/>
            <person name="Kim H.-I."/>
            <person name="Eun M.-Y."/>
            <person name="Yano M."/>
            <person name="Jiang J."/>
            <person name="Gojobori T."/>
        </authorList>
    </citation>
    <scope>NUCLEOTIDE SEQUENCE [LARGE SCALE GENOMIC DNA]</scope>
    <source>
        <strain>cv. Nipponbare</strain>
    </source>
</reference>
<reference key="5">
    <citation type="journal article" date="2005" name="Nature">
        <title>The map-based sequence of the rice genome.</title>
        <authorList>
            <consortium name="International rice genome sequencing project (IRGSP)"/>
        </authorList>
    </citation>
    <scope>NUCLEOTIDE SEQUENCE [LARGE SCALE GENOMIC DNA]</scope>
    <source>
        <strain>cv. Nipponbare</strain>
    </source>
</reference>
<reference key="6">
    <citation type="journal article" date="2008" name="Nucleic Acids Res.">
        <title>The rice annotation project database (RAP-DB): 2008 update.</title>
        <authorList>
            <consortium name="The rice annotation project (RAP)"/>
        </authorList>
    </citation>
    <scope>GENOME REANNOTATION</scope>
    <source>
        <strain>cv. Nipponbare</strain>
    </source>
</reference>
<reference key="7">
    <citation type="journal article" date="2013" name="Rice">
        <title>Improvement of the Oryza sativa Nipponbare reference genome using next generation sequence and optical map data.</title>
        <authorList>
            <person name="Kawahara Y."/>
            <person name="de la Bastide M."/>
            <person name="Hamilton J.P."/>
            <person name="Kanamori H."/>
            <person name="McCombie W.R."/>
            <person name="Ouyang S."/>
            <person name="Schwartz D.C."/>
            <person name="Tanaka T."/>
            <person name="Wu J."/>
            <person name="Zhou S."/>
            <person name="Childs K.L."/>
            <person name="Davidson R.M."/>
            <person name="Lin H."/>
            <person name="Quesada-Ocampo L."/>
            <person name="Vaillancourt B."/>
            <person name="Sakai H."/>
            <person name="Lee S.S."/>
            <person name="Kim J."/>
            <person name="Numa H."/>
            <person name="Itoh T."/>
            <person name="Buell C.R."/>
            <person name="Matsumoto T."/>
        </authorList>
    </citation>
    <scope>GENOME REANNOTATION</scope>
    <source>
        <strain>cv. Nipponbare</strain>
    </source>
</reference>
<reference key="8">
    <citation type="journal article" date="2003" name="Science">
        <title>Collection, mapping, and annotation of over 28,000 cDNA clones from japonica rice.</title>
        <authorList>
            <consortium name="The rice full-length cDNA consortium"/>
        </authorList>
    </citation>
    <scope>NUCLEOTIDE SEQUENCE [LARGE SCALE MRNA]</scope>
    <source>
        <strain>cv. Nipponbare</strain>
    </source>
</reference>
<reference key="9">
    <citation type="journal article" date="2003" name="Plant Cell Physiol.">
        <title>Expression analyses of beta-tubulin isotype genes in rice.</title>
        <authorList>
            <person name="Yoshikawa M."/>
            <person name="Yang G."/>
            <person name="Kawaguchi K."/>
            <person name="Komatsu S."/>
        </authorList>
    </citation>
    <scope>TISSUE SPECIFICITY</scope>
    <scope>INDUCTION</scope>
    <scope>NOMENCLATURE</scope>
</reference>
<evidence type="ECO:0000250" key="1">
    <source>
        <dbReference type="UniProtKB" id="P68363"/>
    </source>
</evidence>
<evidence type="ECO:0000250" key="2">
    <source>
        <dbReference type="UniProtKB" id="Q13509"/>
    </source>
</evidence>
<evidence type="ECO:0000256" key="3">
    <source>
        <dbReference type="SAM" id="MobiDB-lite"/>
    </source>
</evidence>
<evidence type="ECO:0000269" key="4">
    <source>
    </source>
</evidence>
<evidence type="ECO:0000269" key="5">
    <source>
    </source>
</evidence>
<evidence type="ECO:0000269" key="6">
    <source>
    </source>
</evidence>
<evidence type="ECO:0000305" key="7"/>
<accession>P45960</accession>
<accession>Q0JIE9</accession>
<accession>Q7F5W3</accession>
<sequence>MREILHIQGGQCGNQIGAKFWEVVCDEHGIDPTGRYTGNSDLQLERVNVYYNEASCGRFVPRAVLMDLEPGTMDSVRTGPYGQIFRPDNFVFGQSGAGNNWAKGHYTEGAELIDSVLDVVRKEAENCDCLQGFQVCHSLGGGTGSGMGTLLISKIREEYPDRMMLTFSVFPSPKVSDTVVEPYNATLSVHQLVENADECMVLDNEALYDICFRTLKLTTPSFGDLNHLISATMSGVTCCLRFPGQLNSDLRKLAVNLIPFPRLHFFMVGFAPLTSRGSQQYRALTVPELTQQMWDAKNMMCAADPRHGRYLTASAMFRGKMSTKEVDEQMINVQNKNSSYFVEWIPNNVKSSVCDIPPRGLSMASTFIGNSTSIQEMFRRVSEQFTAMFRRKAFLHWYTGEGMDEMEFTEAESNMNDLVSEYQQYQDATADEEGEYEDEEQQEADDM</sequence>
<dbReference type="EMBL" id="D30716">
    <property type="protein sequence ID" value="BAA06381.1"/>
    <property type="molecule type" value="mRNA"/>
</dbReference>
<dbReference type="EMBL" id="L19598">
    <property type="protein sequence ID" value="AAA66495.1"/>
    <property type="molecule type" value="mRNA"/>
</dbReference>
<dbReference type="EMBL" id="X78143">
    <property type="protein sequence ID" value="CAA55022.1"/>
    <property type="molecule type" value="mRNA"/>
</dbReference>
<dbReference type="EMBL" id="AP003232">
    <property type="protein sequence ID" value="BAB92274.1"/>
    <property type="molecule type" value="Genomic_DNA"/>
</dbReference>
<dbReference type="EMBL" id="AP008207">
    <property type="protein sequence ID" value="BAF06479.1"/>
    <property type="molecule type" value="Genomic_DNA"/>
</dbReference>
<dbReference type="EMBL" id="AP014957">
    <property type="protein sequence ID" value="BAS74833.1"/>
    <property type="molecule type" value="Genomic_DNA"/>
</dbReference>
<dbReference type="EMBL" id="AK072502">
    <property type="protein sequence ID" value="BAG93002.1"/>
    <property type="molecule type" value="mRNA"/>
</dbReference>
<dbReference type="PIR" id="S42481">
    <property type="entry name" value="S42481"/>
</dbReference>
<dbReference type="PIR" id="S52007">
    <property type="entry name" value="S52007"/>
</dbReference>
<dbReference type="SMR" id="P45960"/>
<dbReference type="FunCoup" id="P45960">
    <property type="interactions" value="2053"/>
</dbReference>
<dbReference type="STRING" id="39947.P45960"/>
<dbReference type="PaxDb" id="39947-P45960"/>
<dbReference type="EnsemblPlants" id="Os01t0805900-01">
    <property type="protein sequence ID" value="Os01t0805900-01"/>
    <property type="gene ID" value="Os01g0805900"/>
</dbReference>
<dbReference type="Gramene" id="Os01t0805900-01">
    <property type="protein sequence ID" value="Os01t0805900-01"/>
    <property type="gene ID" value="Os01g0805900"/>
</dbReference>
<dbReference type="KEGG" id="dosa:Os01g0805900"/>
<dbReference type="eggNOG" id="KOG1375">
    <property type="taxonomic scope" value="Eukaryota"/>
</dbReference>
<dbReference type="HOGENOM" id="CLU_015718_1_1_1"/>
<dbReference type="InParanoid" id="P45960"/>
<dbReference type="OMA" id="MANTTKY"/>
<dbReference type="Proteomes" id="UP000000763">
    <property type="component" value="Chromosome 1"/>
</dbReference>
<dbReference type="Proteomes" id="UP000059680">
    <property type="component" value="Chromosome 1"/>
</dbReference>
<dbReference type="GO" id="GO:0005737">
    <property type="term" value="C:cytoplasm"/>
    <property type="evidence" value="ECO:0000318"/>
    <property type="project" value="GO_Central"/>
</dbReference>
<dbReference type="GO" id="GO:0005874">
    <property type="term" value="C:microtubule"/>
    <property type="evidence" value="ECO:0000318"/>
    <property type="project" value="GO_Central"/>
</dbReference>
<dbReference type="GO" id="GO:0005525">
    <property type="term" value="F:GTP binding"/>
    <property type="evidence" value="ECO:0000318"/>
    <property type="project" value="GO_Central"/>
</dbReference>
<dbReference type="GO" id="GO:0003924">
    <property type="term" value="F:GTPase activity"/>
    <property type="evidence" value="ECO:0007669"/>
    <property type="project" value="InterPro"/>
</dbReference>
<dbReference type="GO" id="GO:0046872">
    <property type="term" value="F:metal ion binding"/>
    <property type="evidence" value="ECO:0007669"/>
    <property type="project" value="UniProtKB-KW"/>
</dbReference>
<dbReference type="GO" id="GO:0005200">
    <property type="term" value="F:structural constituent of cytoskeleton"/>
    <property type="evidence" value="ECO:0000318"/>
    <property type="project" value="GO_Central"/>
</dbReference>
<dbReference type="GO" id="GO:0000226">
    <property type="term" value="P:microtubule cytoskeleton organization"/>
    <property type="evidence" value="ECO:0000318"/>
    <property type="project" value="GO_Central"/>
</dbReference>
<dbReference type="GO" id="GO:0000278">
    <property type="term" value="P:mitotic cell cycle"/>
    <property type="evidence" value="ECO:0000318"/>
    <property type="project" value="GO_Central"/>
</dbReference>
<dbReference type="CDD" id="cd02187">
    <property type="entry name" value="beta_tubulin"/>
    <property type="match status" value="1"/>
</dbReference>
<dbReference type="FunFam" id="1.10.287.600:FF:000002">
    <property type="entry name" value="Tubulin beta chain"/>
    <property type="match status" value="1"/>
</dbReference>
<dbReference type="FunFam" id="3.30.1330.20:FF:000002">
    <property type="entry name" value="Tubulin beta chain"/>
    <property type="match status" value="1"/>
</dbReference>
<dbReference type="FunFam" id="3.40.50.1440:FF:000005">
    <property type="entry name" value="Tubulin beta chain"/>
    <property type="match status" value="1"/>
</dbReference>
<dbReference type="Gene3D" id="1.10.287.600">
    <property type="entry name" value="Helix hairpin bin"/>
    <property type="match status" value="1"/>
</dbReference>
<dbReference type="Gene3D" id="3.30.1330.20">
    <property type="entry name" value="Tubulin/FtsZ, C-terminal domain"/>
    <property type="match status" value="1"/>
</dbReference>
<dbReference type="Gene3D" id="3.40.50.1440">
    <property type="entry name" value="Tubulin/FtsZ, GTPase domain"/>
    <property type="match status" value="1"/>
</dbReference>
<dbReference type="InterPro" id="IPR013838">
    <property type="entry name" value="Beta-tubulin_BS"/>
</dbReference>
<dbReference type="InterPro" id="IPR002453">
    <property type="entry name" value="Beta_tubulin"/>
</dbReference>
<dbReference type="InterPro" id="IPR008280">
    <property type="entry name" value="Tub_FtsZ_C"/>
</dbReference>
<dbReference type="InterPro" id="IPR000217">
    <property type="entry name" value="Tubulin"/>
</dbReference>
<dbReference type="InterPro" id="IPR037103">
    <property type="entry name" value="Tubulin/FtsZ-like_C"/>
</dbReference>
<dbReference type="InterPro" id="IPR018316">
    <property type="entry name" value="Tubulin/FtsZ_2-layer-sand-dom"/>
</dbReference>
<dbReference type="InterPro" id="IPR036525">
    <property type="entry name" value="Tubulin/FtsZ_GTPase_sf"/>
</dbReference>
<dbReference type="InterPro" id="IPR023123">
    <property type="entry name" value="Tubulin_C"/>
</dbReference>
<dbReference type="InterPro" id="IPR017975">
    <property type="entry name" value="Tubulin_CS"/>
</dbReference>
<dbReference type="InterPro" id="IPR003008">
    <property type="entry name" value="Tubulin_FtsZ_GTPase"/>
</dbReference>
<dbReference type="PANTHER" id="PTHR11588">
    <property type="entry name" value="TUBULIN"/>
    <property type="match status" value="1"/>
</dbReference>
<dbReference type="Pfam" id="PF00091">
    <property type="entry name" value="Tubulin"/>
    <property type="match status" value="1"/>
</dbReference>
<dbReference type="Pfam" id="PF03953">
    <property type="entry name" value="Tubulin_C"/>
    <property type="match status" value="1"/>
</dbReference>
<dbReference type="PRINTS" id="PR01163">
    <property type="entry name" value="BETATUBULIN"/>
</dbReference>
<dbReference type="PRINTS" id="PR01161">
    <property type="entry name" value="TUBULIN"/>
</dbReference>
<dbReference type="SMART" id="SM00864">
    <property type="entry name" value="Tubulin"/>
    <property type="match status" value="1"/>
</dbReference>
<dbReference type="SMART" id="SM00865">
    <property type="entry name" value="Tubulin_C"/>
    <property type="match status" value="1"/>
</dbReference>
<dbReference type="SUPFAM" id="SSF55307">
    <property type="entry name" value="Tubulin C-terminal domain-like"/>
    <property type="match status" value="1"/>
</dbReference>
<dbReference type="SUPFAM" id="SSF52490">
    <property type="entry name" value="Tubulin nucleotide-binding domain-like"/>
    <property type="match status" value="1"/>
</dbReference>
<dbReference type="PROSITE" id="PS00227">
    <property type="entry name" value="TUBULIN"/>
    <property type="match status" value="1"/>
</dbReference>
<dbReference type="PROSITE" id="PS00228">
    <property type="entry name" value="TUBULIN_B_AUTOREG"/>
    <property type="match status" value="1"/>
</dbReference>
<keyword id="KW-0963">Cytoplasm</keyword>
<keyword id="KW-0206">Cytoskeleton</keyword>
<keyword id="KW-0342">GTP-binding</keyword>
<keyword id="KW-0460">Magnesium</keyword>
<keyword id="KW-0479">Metal-binding</keyword>
<keyword id="KW-0493">Microtubule</keyword>
<keyword id="KW-0547">Nucleotide-binding</keyword>
<keyword id="KW-1185">Reference proteome</keyword>
<organism>
    <name type="scientific">Oryza sativa subsp. japonica</name>
    <name type="common">Rice</name>
    <dbReference type="NCBI Taxonomy" id="39947"/>
    <lineage>
        <taxon>Eukaryota</taxon>
        <taxon>Viridiplantae</taxon>
        <taxon>Streptophyta</taxon>
        <taxon>Embryophyta</taxon>
        <taxon>Tracheophyta</taxon>
        <taxon>Spermatophyta</taxon>
        <taxon>Magnoliopsida</taxon>
        <taxon>Liliopsida</taxon>
        <taxon>Poales</taxon>
        <taxon>Poaceae</taxon>
        <taxon>BOP clade</taxon>
        <taxon>Oryzoideae</taxon>
        <taxon>Oryzeae</taxon>
        <taxon>Oryzinae</taxon>
        <taxon>Oryza</taxon>
        <taxon>Oryza sativa</taxon>
    </lineage>
</organism>
<comment type="function">
    <text>Tubulin is the major constituent of microtubules, a cylinder consisting of laterally associated linear protofilaments composed of alpha- and beta-tubulin heterodimers. Microtubules grow by the addition of GTP-tubulin dimers to the microtubule end, where a stabilizing cap forms. Below the cap, tubulin dimers are in GDP-bound state, owing to GTPase activity of alpha-tubulin.</text>
</comment>
<comment type="cofactor">
    <cofactor evidence="1">
        <name>Mg(2+)</name>
        <dbReference type="ChEBI" id="CHEBI:18420"/>
    </cofactor>
</comment>
<comment type="subunit">
    <text>Dimer of alpha and beta chains. A typical microtubule is a hollow water-filled tube with an outer diameter of 25 nm and an inner diameter of 15 nM. Alpha-beta heterodimers associate head-to-tail to form protofilaments running lengthwise along the microtubule wall with the beta-tubulin subunit facing the microtubule plus end conferring a structural polarity. Microtubules usually have 13 protofilaments but different protofilament numbers can be found in some organisms and specialized cells.</text>
</comment>
<comment type="subcellular location">
    <subcellularLocation>
        <location>Cytoplasm</location>
        <location>Cytoskeleton</location>
    </subcellularLocation>
</comment>
<comment type="tissue specificity">
    <text evidence="4">Expressed in roots and leaf sheaths.</text>
</comment>
<comment type="developmental stage">
    <text evidence="6">Expressed in shoots of 4 day old dark-grown seedlings.</text>
</comment>
<comment type="induction">
    <text evidence="4 5">Down-regulated by abscisic acid (ABA).</text>
</comment>
<comment type="similarity">
    <text evidence="7">Belongs to the tubulin family.</text>
</comment>
<proteinExistence type="evidence at transcript level"/>
<protein>
    <recommendedName>
        <fullName>Tubulin beta-4 chain</fullName>
    </recommendedName>
    <alternativeName>
        <fullName>Beta-4-tubulin</fullName>
    </alternativeName>
</protein>
<gene>
    <name type="primary">TUBB4</name>
    <name type="synonym">OSTB-16</name>
    <name type="synonym">R1623</name>
    <name type="synonym">RTUB-1</name>
    <name type="synonym">TUB4</name>
    <name type="ordered locus">Os01g0805900</name>
    <name type="ordered locus">LOC_Os01g59150</name>
    <name type="ORF">P0034E02.62</name>
</gene>
<name>TBB4_ORYSJ</name>